<organism>
    <name type="scientific">Crotalus adamanteus</name>
    <name type="common">Eastern diamondback rattlesnake</name>
    <dbReference type="NCBI Taxonomy" id="8729"/>
    <lineage>
        <taxon>Eukaryota</taxon>
        <taxon>Metazoa</taxon>
        <taxon>Chordata</taxon>
        <taxon>Craniata</taxon>
        <taxon>Vertebrata</taxon>
        <taxon>Euteleostomi</taxon>
        <taxon>Lepidosauria</taxon>
        <taxon>Squamata</taxon>
        <taxon>Bifurcata</taxon>
        <taxon>Unidentata</taxon>
        <taxon>Episquamata</taxon>
        <taxon>Toxicofera</taxon>
        <taxon>Serpentes</taxon>
        <taxon>Colubroidea</taxon>
        <taxon>Viperidae</taxon>
        <taxon>Crotalinae</taxon>
        <taxon>Crotalus</taxon>
    </lineage>
</organism>
<comment type="function">
    <text evidence="1">Interferes with one step of hemostasis (modulation of platelet aggregation, or coagulation cascade, for example).</text>
</comment>
<comment type="subunit">
    <text evidence="1">Heteromultimer; disulfide-linked.</text>
</comment>
<comment type="subcellular location">
    <subcellularLocation>
        <location>Secreted</location>
    </subcellularLocation>
</comment>
<comment type="tissue specificity">
    <text>Expressed by the venom gland.</text>
</comment>
<comment type="similarity">
    <text evidence="3">Belongs to the snaclec family.</text>
</comment>
<feature type="signal peptide" evidence="1">
    <location>
        <begin position="1"/>
        <end position="27"/>
    </location>
</feature>
<feature type="chain" id="PRO_0000425657" description="C-type lectin 16">
    <location>
        <begin position="28"/>
        <end position="150"/>
    </location>
</feature>
<feature type="domain" description="C-type lectin" evidence="2">
    <location>
        <begin position="36"/>
        <end position="147"/>
    </location>
</feature>
<feature type="disulfide bond" evidence="2">
    <location>
        <begin position="29"/>
        <end position="40"/>
    </location>
</feature>
<feature type="disulfide bond" evidence="2">
    <location>
        <begin position="57"/>
        <end position="146"/>
    </location>
</feature>
<feature type="disulfide bond" description="Interchain" evidence="2">
    <location>
        <position position="102"/>
    </location>
</feature>
<feature type="disulfide bond" evidence="2">
    <location>
        <begin position="123"/>
        <end position="138"/>
    </location>
</feature>
<accession>J3S3U6</accession>
<protein>
    <recommendedName>
        <fullName>C-type lectin 16</fullName>
    </recommendedName>
</protein>
<sequence length="150" mass="17342">MKRVRVKVIFVSFGLLVVFLSLSGTAADCPSSWSSYEGHCYKPFNEGKNWADAENFCTQQHTGGHLVSFHSTEEADFVVKLAFQTFGHSIFWIGLSNVWNKCSWQWSNGAMLKYEDWAEESYCVYFKSTNNKWRSRACRMLARFVCEFQA</sequence>
<keyword id="KW-1015">Disulfide bond</keyword>
<keyword id="KW-1199">Hemostasis impairing toxin</keyword>
<keyword id="KW-0479">Metal-binding</keyword>
<keyword id="KW-0964">Secreted</keyword>
<keyword id="KW-0732">Signal</keyword>
<keyword id="KW-0800">Toxin</keyword>
<dbReference type="EMBL" id="JU173631">
    <property type="protein sequence ID" value="AFJ49157.1"/>
    <property type="molecule type" value="mRNA"/>
</dbReference>
<dbReference type="SMR" id="J3S3U6"/>
<dbReference type="GO" id="GO:0005576">
    <property type="term" value="C:extracellular region"/>
    <property type="evidence" value="ECO:0007669"/>
    <property type="project" value="UniProtKB-SubCell"/>
</dbReference>
<dbReference type="GO" id="GO:0046872">
    <property type="term" value="F:metal ion binding"/>
    <property type="evidence" value="ECO:0007669"/>
    <property type="project" value="UniProtKB-KW"/>
</dbReference>
<dbReference type="GO" id="GO:0090729">
    <property type="term" value="F:toxin activity"/>
    <property type="evidence" value="ECO:0007669"/>
    <property type="project" value="UniProtKB-KW"/>
</dbReference>
<dbReference type="FunFam" id="3.10.100.10:FF:000087">
    <property type="entry name" value="Snaclec rhodocetin subunit delta"/>
    <property type="match status" value="1"/>
</dbReference>
<dbReference type="Gene3D" id="3.10.100.10">
    <property type="entry name" value="Mannose-Binding Protein A, subunit A"/>
    <property type="match status" value="1"/>
</dbReference>
<dbReference type="InterPro" id="IPR001304">
    <property type="entry name" value="C-type_lectin-like"/>
</dbReference>
<dbReference type="InterPro" id="IPR016186">
    <property type="entry name" value="C-type_lectin-like/link_sf"/>
</dbReference>
<dbReference type="InterPro" id="IPR050111">
    <property type="entry name" value="C-type_lectin/snaclec_domain"/>
</dbReference>
<dbReference type="InterPro" id="IPR018378">
    <property type="entry name" value="C-type_lectin_CS"/>
</dbReference>
<dbReference type="InterPro" id="IPR016187">
    <property type="entry name" value="CTDL_fold"/>
</dbReference>
<dbReference type="PANTHER" id="PTHR22803">
    <property type="entry name" value="MANNOSE, PHOSPHOLIPASE, LECTIN RECEPTOR RELATED"/>
    <property type="match status" value="1"/>
</dbReference>
<dbReference type="Pfam" id="PF00059">
    <property type="entry name" value="Lectin_C"/>
    <property type="match status" value="1"/>
</dbReference>
<dbReference type="PRINTS" id="PR01504">
    <property type="entry name" value="PNCREATITSAP"/>
</dbReference>
<dbReference type="SMART" id="SM00034">
    <property type="entry name" value="CLECT"/>
    <property type="match status" value="1"/>
</dbReference>
<dbReference type="SUPFAM" id="SSF56436">
    <property type="entry name" value="C-type lectin-like"/>
    <property type="match status" value="1"/>
</dbReference>
<dbReference type="PROSITE" id="PS00615">
    <property type="entry name" value="C_TYPE_LECTIN_1"/>
    <property type="match status" value="1"/>
</dbReference>
<dbReference type="PROSITE" id="PS50041">
    <property type="entry name" value="C_TYPE_LECTIN_2"/>
    <property type="match status" value="1"/>
</dbReference>
<evidence type="ECO:0000250" key="1"/>
<evidence type="ECO:0000255" key="2">
    <source>
        <dbReference type="PROSITE-ProRule" id="PRU00040"/>
    </source>
</evidence>
<evidence type="ECO:0000305" key="3"/>
<reference key="1">
    <citation type="journal article" date="2012" name="BMC Genomics">
        <title>The venom-gland transcriptome of the eastern diamondback rattlesnake (Crotalus adamanteus).</title>
        <authorList>
            <person name="Rokyta D.R."/>
            <person name="Lemmon A.R."/>
            <person name="Margres M.J."/>
            <person name="Aronow K."/>
        </authorList>
    </citation>
    <scope>NUCLEOTIDE SEQUENCE [MRNA]</scope>
    <source>
        <tissue>Venom gland</tissue>
    </source>
</reference>
<reference key="2">
    <citation type="journal article" date="2014" name="J. Proteomics">
        <title>Linking the transcriptome and proteome to characterize the venom of the eastern diamondback rattlesnake (Crotalus adamanteus).</title>
        <authorList>
            <person name="Margres M.J."/>
            <person name="McGivern J.J."/>
            <person name="Wray K.P."/>
            <person name="Seavy M."/>
            <person name="Calvin K."/>
            <person name="Rokyta D.R."/>
        </authorList>
    </citation>
    <scope>IDENTIFICATION BY MASS SPECTROMETRY</scope>
    <source>
        <tissue>Venom</tissue>
    </source>
</reference>
<name>SLG_CROAD</name>
<proteinExistence type="evidence at protein level"/>